<keyword id="KW-0002">3D-structure</keyword>
<keyword id="KW-0007">Acetylation</keyword>
<keyword id="KW-0010">Activator</keyword>
<keyword id="KW-0025">Alternative splicing</keyword>
<keyword id="KW-0090">Biological rhythms</keyword>
<keyword id="KW-0175">Coiled coil</keyword>
<keyword id="KW-0963">Cytoplasm</keyword>
<keyword id="KW-0903">Direct protein sequencing</keyword>
<keyword id="KW-0391">Immunity</keyword>
<keyword id="KW-0399">Innate immunity</keyword>
<keyword id="KW-0488">Methylation</keyword>
<keyword id="KW-0539">Nucleus</keyword>
<keyword id="KW-0597">Phosphoprotein</keyword>
<keyword id="KW-1267">Proteomics identification</keyword>
<keyword id="KW-1185">Reference proteome</keyword>
<keyword id="KW-0677">Repeat</keyword>
<keyword id="KW-0678">Repressor</keyword>
<keyword id="KW-0694">RNA-binding</keyword>
<keyword id="KW-0804">Transcription</keyword>
<keyword id="KW-0805">Transcription regulation</keyword>
<feature type="chain" id="PRO_0000297540" description="Paraspeckle component 1">
    <location>
        <begin position="1"/>
        <end position="523"/>
    </location>
</feature>
<feature type="domain" description="RRM 1" evidence="3">
    <location>
        <begin position="82"/>
        <end position="154"/>
    </location>
</feature>
<feature type="domain" description="RRM 2" evidence="3">
    <location>
        <begin position="156"/>
        <end position="237"/>
    </location>
</feature>
<feature type="region of interest" description="Sufficient for paraspeckles localization" evidence="6">
    <location>
        <begin position="125"/>
        <end position="358"/>
    </location>
</feature>
<feature type="region of interest" description="Sufficient for perinucleolar caps localization and interaction with NONO" evidence="6">
    <location>
        <begin position="231"/>
        <end position="358"/>
    </location>
</feature>
<feature type="region of interest" description="Disordered" evidence="4">
    <location>
        <begin position="460"/>
        <end position="523"/>
    </location>
</feature>
<feature type="coiled-coil region" evidence="2">
    <location>
        <begin position="283"/>
        <end position="377"/>
    </location>
</feature>
<feature type="compositionally biased region" description="Polar residues" evidence="4">
    <location>
        <begin position="472"/>
        <end position="490"/>
    </location>
</feature>
<feature type="compositionally biased region" description="Gly residues" evidence="4">
    <location>
        <begin position="497"/>
        <end position="514"/>
    </location>
</feature>
<feature type="modified residue" description="N-acetylmethionine" evidence="17">
    <location>
        <position position="1"/>
    </location>
</feature>
<feature type="modified residue" description="Phosphoserine" evidence="18">
    <location>
        <position position="409"/>
    </location>
</feature>
<feature type="modified residue" description="Phosphoserine" evidence="18">
    <location>
        <position position="473"/>
    </location>
</feature>
<feature type="modified residue" description="Phosphoserine" evidence="18 19">
    <location>
        <position position="477"/>
    </location>
</feature>
<feature type="modified residue" description="Omega-N-methylarginine" evidence="20">
    <location>
        <position position="507"/>
    </location>
</feature>
<feature type="modified residue" description="Phosphoserine" evidence="16">
    <location>
        <position position="509"/>
    </location>
</feature>
<feature type="splice variant" id="VSP_027274" description="In isoform 2." evidence="10 11 12 13 14">
    <original>REQEMRM</original>
    <variation>GDKRKCG</variation>
    <location>
        <begin position="387"/>
        <end position="393"/>
    </location>
</feature>
<feature type="splice variant" id="VSP_027275" description="In isoform 2." evidence="10 11 12 13 14">
    <location>
        <begin position="394"/>
        <end position="523"/>
    </location>
</feature>
<feature type="mutagenesis site" description="Abolishes accumulation in paraspeckles, but not in perinucleolar caps; when associated with A-121; A-198 and A-200." evidence="6">
    <original>F</original>
    <variation>A</variation>
    <location>
        <position position="119"/>
    </location>
</feature>
<feature type="mutagenesis site" description="Abolishes accumulation in paraspeckles, but not in perinucleolar caps; when associated with A-119; A-198 and A-200." evidence="6">
    <original>F</original>
    <variation>A</variation>
    <location>
        <position position="121"/>
    </location>
</feature>
<feature type="mutagenesis site" description="Abolishes accumulation in paraspeckles, but not in perinucleolar caps; when associated with A-119; A-121 and A-200." evidence="6">
    <original>K</original>
    <variation>A</variation>
    <location>
        <position position="198"/>
    </location>
</feature>
<feature type="mutagenesis site" description="Abolishes accumulation in paraspeckles, but not in perinucleolar caps; when associated with A-119; A-121 and A-198." evidence="6">
    <original>F</original>
    <variation>A</variation>
    <location>
        <position position="200"/>
    </location>
</feature>
<feature type="mutagenesis site" description="Abolishes interaction with NONO and localization in nuclear paraspeckles; when associated with A-279." evidence="7">
    <original>Y</original>
    <variation>A</variation>
    <location>
        <position position="275"/>
    </location>
</feature>
<feature type="mutagenesis site" description="Abolishes interaction with NONO and localization in nuclear paraspeckles; when associated with A-275." evidence="7">
    <original>W</original>
    <variation>A</variation>
    <location>
        <position position="279"/>
    </location>
</feature>
<feature type="strand" evidence="22">
    <location>
        <begin position="65"/>
        <end position="68"/>
    </location>
</feature>
<feature type="helix" evidence="21">
    <location>
        <begin position="80"/>
        <end position="82"/>
    </location>
</feature>
<feature type="strand" evidence="21">
    <location>
        <begin position="83"/>
        <end position="88"/>
    </location>
</feature>
<feature type="helix" evidence="21">
    <location>
        <begin position="95"/>
        <end position="101"/>
    </location>
</feature>
<feature type="helix" evidence="21">
    <location>
        <begin position="102"/>
        <end position="105"/>
    </location>
</feature>
<feature type="strand" evidence="21">
    <location>
        <begin position="109"/>
        <end position="114"/>
    </location>
</feature>
<feature type="turn" evidence="21">
    <location>
        <begin position="115"/>
        <end position="118"/>
    </location>
</feature>
<feature type="strand" evidence="21">
    <location>
        <begin position="119"/>
        <end position="123"/>
    </location>
</feature>
<feature type="helix" evidence="21">
    <location>
        <begin position="127"/>
        <end position="137"/>
    </location>
</feature>
<feature type="strand" evidence="23">
    <location>
        <begin position="141"/>
        <end position="146"/>
    </location>
</feature>
<feature type="strand" evidence="21">
    <location>
        <begin position="148"/>
        <end position="151"/>
    </location>
</feature>
<feature type="strand" evidence="21">
    <location>
        <begin position="155"/>
        <end position="162"/>
    </location>
</feature>
<feature type="helix" evidence="21">
    <location>
        <begin position="169"/>
        <end position="176"/>
    </location>
</feature>
<feature type="helix" evidence="21">
    <location>
        <begin position="177"/>
        <end position="179"/>
    </location>
</feature>
<feature type="strand" evidence="21">
    <location>
        <begin position="182"/>
        <end position="190"/>
    </location>
</feature>
<feature type="strand" evidence="21">
    <location>
        <begin position="195"/>
        <end position="205"/>
    </location>
</feature>
<feature type="helix" evidence="21">
    <location>
        <begin position="206"/>
        <end position="218"/>
    </location>
</feature>
<feature type="strand" evidence="21">
    <location>
        <begin position="221"/>
        <end position="226"/>
    </location>
</feature>
<feature type="strand" evidence="21">
    <location>
        <begin position="231"/>
        <end position="234"/>
    </location>
</feature>
<feature type="strand" evidence="21">
    <location>
        <begin position="238"/>
        <end position="242"/>
    </location>
</feature>
<feature type="helix" evidence="21">
    <location>
        <begin position="246"/>
        <end position="248"/>
    </location>
</feature>
<feature type="helix" evidence="21">
    <location>
        <begin position="253"/>
        <end position="259"/>
    </location>
</feature>
<feature type="strand" evidence="21">
    <location>
        <begin position="263"/>
        <end position="265"/>
    </location>
</feature>
<feature type="helix" evidence="21">
    <location>
        <begin position="271"/>
        <end position="318"/>
    </location>
</feature>
<reference key="1">
    <citation type="journal article" date="2002" name="Curr. Biol.">
        <title>Paraspeckles: a novel nuclear domain.</title>
        <authorList>
            <person name="Fox A.H."/>
            <person name="Lam Y.W."/>
            <person name="Leung A.K.L."/>
            <person name="Lyon C.E."/>
            <person name="Andersen J."/>
            <person name="Mann M."/>
            <person name="Lamond A.I."/>
        </authorList>
    </citation>
    <scope>NUCLEOTIDE SEQUENCE [MRNA] (ISOFORMS 1 AND 2)</scope>
    <scope>PROTEIN SEQUENCE OF 21-83; 105-124; 135-143; 185-194; 199-210; 252-259; 265-289; 327-345; 352-357; 366-374 AND 483-507</scope>
    <scope>IDENTIFICATION BY MASS SPECTROMETRY</scope>
    <scope>SUBCELLULAR LOCATION</scope>
    <scope>TISSUE SPECIFICITY</scope>
</reference>
<reference key="2">
    <citation type="journal article" date="2004" name="Nat. Genet.">
        <title>Complete sequencing and characterization of 21,243 full-length human cDNAs.</title>
        <authorList>
            <person name="Ota T."/>
            <person name="Suzuki Y."/>
            <person name="Nishikawa T."/>
            <person name="Otsuki T."/>
            <person name="Sugiyama T."/>
            <person name="Irie R."/>
            <person name="Wakamatsu A."/>
            <person name="Hayashi K."/>
            <person name="Sato H."/>
            <person name="Nagai K."/>
            <person name="Kimura K."/>
            <person name="Makita H."/>
            <person name="Sekine M."/>
            <person name="Obayashi M."/>
            <person name="Nishi T."/>
            <person name="Shibahara T."/>
            <person name="Tanaka T."/>
            <person name="Ishii S."/>
            <person name="Yamamoto J."/>
            <person name="Saito K."/>
            <person name="Kawai Y."/>
            <person name="Isono Y."/>
            <person name="Nakamura Y."/>
            <person name="Nagahari K."/>
            <person name="Murakami K."/>
            <person name="Yasuda T."/>
            <person name="Iwayanagi T."/>
            <person name="Wagatsuma M."/>
            <person name="Shiratori A."/>
            <person name="Sudo H."/>
            <person name="Hosoiri T."/>
            <person name="Kaku Y."/>
            <person name="Kodaira H."/>
            <person name="Kondo H."/>
            <person name="Sugawara M."/>
            <person name="Takahashi M."/>
            <person name="Kanda K."/>
            <person name="Yokoi T."/>
            <person name="Furuya T."/>
            <person name="Kikkawa E."/>
            <person name="Omura Y."/>
            <person name="Abe K."/>
            <person name="Kamihara K."/>
            <person name="Katsuta N."/>
            <person name="Sato K."/>
            <person name="Tanikawa M."/>
            <person name="Yamazaki M."/>
            <person name="Ninomiya K."/>
            <person name="Ishibashi T."/>
            <person name="Yamashita H."/>
            <person name="Murakawa K."/>
            <person name="Fujimori K."/>
            <person name="Tanai H."/>
            <person name="Kimata M."/>
            <person name="Watanabe M."/>
            <person name="Hiraoka S."/>
            <person name="Chiba Y."/>
            <person name="Ishida S."/>
            <person name="Ono Y."/>
            <person name="Takiguchi S."/>
            <person name="Watanabe S."/>
            <person name="Yosida M."/>
            <person name="Hotuta T."/>
            <person name="Kusano J."/>
            <person name="Kanehori K."/>
            <person name="Takahashi-Fujii A."/>
            <person name="Hara H."/>
            <person name="Tanase T.-O."/>
            <person name="Nomura Y."/>
            <person name="Togiya S."/>
            <person name="Komai F."/>
            <person name="Hara R."/>
            <person name="Takeuchi K."/>
            <person name="Arita M."/>
            <person name="Imose N."/>
            <person name="Musashino K."/>
            <person name="Yuuki H."/>
            <person name="Oshima A."/>
            <person name="Sasaki N."/>
            <person name="Aotsuka S."/>
            <person name="Yoshikawa Y."/>
            <person name="Matsunawa H."/>
            <person name="Ichihara T."/>
            <person name="Shiohata N."/>
            <person name="Sano S."/>
            <person name="Moriya S."/>
            <person name="Momiyama H."/>
            <person name="Satoh N."/>
            <person name="Takami S."/>
            <person name="Terashima Y."/>
            <person name="Suzuki O."/>
            <person name="Nakagawa S."/>
            <person name="Senoh A."/>
            <person name="Mizoguchi H."/>
            <person name="Goto Y."/>
            <person name="Shimizu F."/>
            <person name="Wakebe H."/>
            <person name="Hishigaki H."/>
            <person name="Watanabe T."/>
            <person name="Sugiyama A."/>
            <person name="Takemoto M."/>
            <person name="Kawakami B."/>
            <person name="Yamazaki M."/>
            <person name="Watanabe K."/>
            <person name="Kumagai A."/>
            <person name="Itakura S."/>
            <person name="Fukuzumi Y."/>
            <person name="Fujimori Y."/>
            <person name="Komiyama M."/>
            <person name="Tashiro H."/>
            <person name="Tanigami A."/>
            <person name="Fujiwara T."/>
            <person name="Ono T."/>
            <person name="Yamada K."/>
            <person name="Fujii Y."/>
            <person name="Ozaki K."/>
            <person name="Hirao M."/>
            <person name="Ohmori Y."/>
            <person name="Kawabata A."/>
            <person name="Hikiji T."/>
            <person name="Kobatake N."/>
            <person name="Inagaki H."/>
            <person name="Ikema Y."/>
            <person name="Okamoto S."/>
            <person name="Okitani R."/>
            <person name="Kawakami T."/>
            <person name="Noguchi S."/>
            <person name="Itoh T."/>
            <person name="Shigeta K."/>
            <person name="Senba T."/>
            <person name="Matsumura K."/>
            <person name="Nakajima Y."/>
            <person name="Mizuno T."/>
            <person name="Morinaga M."/>
            <person name="Sasaki M."/>
            <person name="Togashi T."/>
            <person name="Oyama M."/>
            <person name="Hata H."/>
            <person name="Watanabe M."/>
            <person name="Komatsu T."/>
            <person name="Mizushima-Sugano J."/>
            <person name="Satoh T."/>
            <person name="Shirai Y."/>
            <person name="Takahashi Y."/>
            <person name="Nakagawa K."/>
            <person name="Okumura K."/>
            <person name="Nagase T."/>
            <person name="Nomura N."/>
            <person name="Kikuchi H."/>
            <person name="Masuho Y."/>
            <person name="Yamashita R."/>
            <person name="Nakai K."/>
            <person name="Yada T."/>
            <person name="Nakamura Y."/>
            <person name="Ohara O."/>
            <person name="Isogai T."/>
            <person name="Sugano S."/>
        </authorList>
    </citation>
    <scope>NUCLEOTIDE SEQUENCE [LARGE SCALE MRNA] (ISOFORM 2)</scope>
    <source>
        <tissue>Placenta</tissue>
    </source>
</reference>
<reference key="3">
    <citation type="journal article" date="2004" name="Nature">
        <title>The DNA sequence and analysis of human chromosome 13.</title>
        <authorList>
            <person name="Dunham A."/>
            <person name="Matthews L.H."/>
            <person name="Burton J."/>
            <person name="Ashurst J.L."/>
            <person name="Howe K.L."/>
            <person name="Ashcroft K.J."/>
            <person name="Beare D.M."/>
            <person name="Burford D.C."/>
            <person name="Hunt S.E."/>
            <person name="Griffiths-Jones S."/>
            <person name="Jones M.C."/>
            <person name="Keenan S.J."/>
            <person name="Oliver K."/>
            <person name="Scott C.E."/>
            <person name="Ainscough R."/>
            <person name="Almeida J.P."/>
            <person name="Ambrose K.D."/>
            <person name="Andrews D.T."/>
            <person name="Ashwell R.I.S."/>
            <person name="Babbage A.K."/>
            <person name="Bagguley C.L."/>
            <person name="Bailey J."/>
            <person name="Bannerjee R."/>
            <person name="Barlow K.F."/>
            <person name="Bates K."/>
            <person name="Beasley H."/>
            <person name="Bird C.P."/>
            <person name="Bray-Allen S."/>
            <person name="Brown A.J."/>
            <person name="Brown J.Y."/>
            <person name="Burrill W."/>
            <person name="Carder C."/>
            <person name="Carter N.P."/>
            <person name="Chapman J.C."/>
            <person name="Clamp M.E."/>
            <person name="Clark S.Y."/>
            <person name="Clarke G."/>
            <person name="Clee C.M."/>
            <person name="Clegg S.C."/>
            <person name="Cobley V."/>
            <person name="Collins J.E."/>
            <person name="Corby N."/>
            <person name="Coville G.J."/>
            <person name="Deloukas P."/>
            <person name="Dhami P."/>
            <person name="Dunham I."/>
            <person name="Dunn M."/>
            <person name="Earthrowl M.E."/>
            <person name="Ellington A.G."/>
            <person name="Faulkner L."/>
            <person name="Frankish A.G."/>
            <person name="Frankland J."/>
            <person name="French L."/>
            <person name="Garner P."/>
            <person name="Garnett J."/>
            <person name="Gilbert J.G.R."/>
            <person name="Gilson C.J."/>
            <person name="Ghori J."/>
            <person name="Grafham D.V."/>
            <person name="Gribble S.M."/>
            <person name="Griffiths C."/>
            <person name="Hall R.E."/>
            <person name="Hammond S."/>
            <person name="Harley J.L."/>
            <person name="Hart E.A."/>
            <person name="Heath P.D."/>
            <person name="Howden P.J."/>
            <person name="Huckle E.J."/>
            <person name="Hunt P.J."/>
            <person name="Hunt A.R."/>
            <person name="Johnson C."/>
            <person name="Johnson D."/>
            <person name="Kay M."/>
            <person name="Kimberley A.M."/>
            <person name="King A."/>
            <person name="Laird G.K."/>
            <person name="Langford C.J."/>
            <person name="Lawlor S."/>
            <person name="Leongamornlert D.A."/>
            <person name="Lloyd D.M."/>
            <person name="Lloyd C."/>
            <person name="Loveland J.E."/>
            <person name="Lovell J."/>
            <person name="Martin S."/>
            <person name="Mashreghi-Mohammadi M."/>
            <person name="McLaren S.J."/>
            <person name="McMurray A."/>
            <person name="Milne S."/>
            <person name="Moore M.J.F."/>
            <person name="Nickerson T."/>
            <person name="Palmer S.A."/>
            <person name="Pearce A.V."/>
            <person name="Peck A.I."/>
            <person name="Pelan S."/>
            <person name="Phillimore B."/>
            <person name="Porter K.M."/>
            <person name="Rice C.M."/>
            <person name="Searle S."/>
            <person name="Sehra H.K."/>
            <person name="Shownkeen R."/>
            <person name="Skuce C.D."/>
            <person name="Smith M."/>
            <person name="Steward C.A."/>
            <person name="Sycamore N."/>
            <person name="Tester J."/>
            <person name="Thomas D.W."/>
            <person name="Tracey A."/>
            <person name="Tromans A."/>
            <person name="Tubby B."/>
            <person name="Wall M."/>
            <person name="Wallis J.M."/>
            <person name="West A.P."/>
            <person name="Whitehead S.L."/>
            <person name="Willey D.L."/>
            <person name="Wilming L."/>
            <person name="Wray P.W."/>
            <person name="Wright M.W."/>
            <person name="Young L."/>
            <person name="Coulson A."/>
            <person name="Durbin R.M."/>
            <person name="Hubbard T."/>
            <person name="Sulston J.E."/>
            <person name="Beck S."/>
            <person name="Bentley D.R."/>
            <person name="Rogers J."/>
            <person name="Ross M.T."/>
        </authorList>
    </citation>
    <scope>NUCLEOTIDE SEQUENCE [LARGE SCALE GENOMIC DNA]</scope>
</reference>
<reference key="4">
    <citation type="submission" date="2005-09" db="EMBL/GenBank/DDBJ databases">
        <authorList>
            <person name="Mural R.J."/>
            <person name="Istrail S."/>
            <person name="Sutton G.G."/>
            <person name="Florea L."/>
            <person name="Halpern A.L."/>
            <person name="Mobarry C.M."/>
            <person name="Lippert R."/>
            <person name="Walenz B."/>
            <person name="Shatkay H."/>
            <person name="Dew I."/>
            <person name="Miller J.R."/>
            <person name="Flanigan M.J."/>
            <person name="Edwards N.J."/>
            <person name="Bolanos R."/>
            <person name="Fasulo D."/>
            <person name="Halldorsson B.V."/>
            <person name="Hannenhalli S."/>
            <person name="Turner R."/>
            <person name="Yooseph S."/>
            <person name="Lu F."/>
            <person name="Nusskern D.R."/>
            <person name="Shue B.C."/>
            <person name="Zheng X.H."/>
            <person name="Zhong F."/>
            <person name="Delcher A.L."/>
            <person name="Huson D.H."/>
            <person name="Kravitz S.A."/>
            <person name="Mouchard L."/>
            <person name="Reinert K."/>
            <person name="Remington K.A."/>
            <person name="Clark A.G."/>
            <person name="Waterman M.S."/>
            <person name="Eichler E.E."/>
            <person name="Adams M.D."/>
            <person name="Hunkapiller M.W."/>
            <person name="Myers E.W."/>
            <person name="Venter J.C."/>
        </authorList>
    </citation>
    <scope>NUCLEOTIDE SEQUENCE [LARGE SCALE GENOMIC DNA]</scope>
</reference>
<reference key="5">
    <citation type="journal article" date="2004" name="Genome Res.">
        <title>The status, quality, and expansion of the NIH full-length cDNA project: the Mammalian Gene Collection (MGC).</title>
        <authorList>
            <consortium name="The MGC Project Team"/>
        </authorList>
    </citation>
    <scope>NUCLEOTIDE SEQUENCE [LARGE SCALE MRNA] (ISOFORM 2)</scope>
    <source>
        <tissue>Skin</tissue>
    </source>
</reference>
<reference key="6">
    <citation type="submission" date="2004-06" db="EMBL/GenBank/DDBJ databases">
        <title>Cloning of human full open reading frames in Gateway(TM) system entry vector (pDONR201).</title>
        <authorList>
            <person name="Ebert L."/>
            <person name="Schick M."/>
            <person name="Neubert P."/>
            <person name="Schatten R."/>
            <person name="Henze S."/>
            <person name="Korn B."/>
        </authorList>
    </citation>
    <scope>NUCLEOTIDE SEQUENCE [LARGE SCALE MRNA] OF 37-523 (ISOFORM 2)</scope>
</reference>
<reference key="7">
    <citation type="journal article" date="2007" name="BMC Genomics">
        <title>The full-ORF clone resource of the German cDNA consortium.</title>
        <authorList>
            <person name="Bechtel S."/>
            <person name="Rosenfelder H."/>
            <person name="Duda A."/>
            <person name="Schmidt C.P."/>
            <person name="Ernst U."/>
            <person name="Wellenreuther R."/>
            <person name="Mehrle A."/>
            <person name="Schuster C."/>
            <person name="Bahr A."/>
            <person name="Bloecker H."/>
            <person name="Heubner D."/>
            <person name="Hoerlein A."/>
            <person name="Michel G."/>
            <person name="Wedler H."/>
            <person name="Koehrer K."/>
            <person name="Ottenwaelder B."/>
            <person name="Poustka A."/>
            <person name="Wiemann S."/>
            <person name="Schupp I."/>
        </authorList>
    </citation>
    <scope>NUCLEOTIDE SEQUENCE [LARGE SCALE MRNA] OF 192-523 (ISOFORM 2)</scope>
    <source>
        <tissue>Kidney</tissue>
    </source>
</reference>
<reference key="8">
    <citation type="journal article" date="2005" name="Mol. Biol. Cell">
        <title>P54nrb forms a heterodimer with PSP1 that localizes to paraspeckles in an RNA-dependent manner.</title>
        <authorList>
            <person name="Fox A.H."/>
            <person name="Bond C.S."/>
            <person name="Lamond A.I."/>
        </authorList>
    </citation>
    <scope>SUBUNIT</scope>
    <scope>INTERACTION WITH NONO</scope>
    <scope>MUTAGENESIS OF PHE-119; PHE-121; LYS-198 AND PHE-200</scope>
    <scope>SUBCELLULAR LOCATION</scope>
</reference>
<reference key="9">
    <citation type="journal article" date="2007" name="Science">
        <title>ATM and ATR substrate analysis reveals extensive protein networks responsive to DNA damage.</title>
        <authorList>
            <person name="Matsuoka S."/>
            <person name="Ballif B.A."/>
            <person name="Smogorzewska A."/>
            <person name="McDonald E.R. III"/>
            <person name="Hurov K.E."/>
            <person name="Luo J."/>
            <person name="Bakalarski C.E."/>
            <person name="Zhao Z."/>
            <person name="Solimini N."/>
            <person name="Lerenthal Y."/>
            <person name="Shiloh Y."/>
            <person name="Gygi S.P."/>
            <person name="Elledge S.J."/>
        </authorList>
    </citation>
    <scope>PHOSPHORYLATION [LARGE SCALE ANALYSIS] AT SER-509</scope>
    <scope>IDENTIFICATION BY MASS SPECTROMETRY [LARGE SCALE ANALYSIS]</scope>
    <source>
        <tissue>Embryonic kidney</tissue>
    </source>
</reference>
<reference key="10">
    <citation type="journal article" date="2009" name="Anal. Chem.">
        <title>Lys-N and trypsin cover complementary parts of the phosphoproteome in a refined SCX-based approach.</title>
        <authorList>
            <person name="Gauci S."/>
            <person name="Helbig A.O."/>
            <person name="Slijper M."/>
            <person name="Krijgsveld J."/>
            <person name="Heck A.J."/>
            <person name="Mohammed S."/>
        </authorList>
    </citation>
    <scope>ACETYLATION [LARGE SCALE ANALYSIS] AT MET-1</scope>
    <scope>IDENTIFICATION BY MASS SPECTROMETRY [LARGE SCALE ANALYSIS]</scope>
</reference>
<reference key="11">
    <citation type="journal article" date="2010" name="Sci. Signal.">
        <title>Quantitative phosphoproteomics reveals widespread full phosphorylation site occupancy during mitosis.</title>
        <authorList>
            <person name="Olsen J.V."/>
            <person name="Vermeulen M."/>
            <person name="Santamaria A."/>
            <person name="Kumar C."/>
            <person name="Miller M.L."/>
            <person name="Jensen L.J."/>
            <person name="Gnad F."/>
            <person name="Cox J."/>
            <person name="Jensen T.S."/>
            <person name="Nigg E.A."/>
            <person name="Brunak S."/>
            <person name="Mann M."/>
        </authorList>
    </citation>
    <scope>PHOSPHORYLATION [LARGE SCALE ANALYSIS] AT SER-409; SER-473 AND SER-477</scope>
    <scope>IDENTIFICATION BY MASS SPECTROMETRY [LARGE SCALE ANALYSIS]</scope>
    <source>
        <tissue>Cervix carcinoma</tissue>
    </source>
</reference>
<reference key="12">
    <citation type="journal article" date="2011" name="BMC Syst. Biol.">
        <title>Initial characterization of the human central proteome.</title>
        <authorList>
            <person name="Burkard T.R."/>
            <person name="Planyavsky M."/>
            <person name="Kaupe I."/>
            <person name="Breitwieser F.P."/>
            <person name="Buerckstuemmer T."/>
            <person name="Bennett K.L."/>
            <person name="Superti-Furga G."/>
            <person name="Colinge J."/>
        </authorList>
    </citation>
    <scope>IDENTIFICATION BY MASS SPECTROMETRY [LARGE SCALE ANALYSIS]</scope>
</reference>
<reference key="13">
    <citation type="journal article" date="2013" name="J. Proteome Res.">
        <title>Toward a comprehensive characterization of a human cancer cell phosphoproteome.</title>
        <authorList>
            <person name="Zhou H."/>
            <person name="Di Palma S."/>
            <person name="Preisinger C."/>
            <person name="Peng M."/>
            <person name="Polat A.N."/>
            <person name="Heck A.J."/>
            <person name="Mohammed S."/>
        </authorList>
    </citation>
    <scope>PHOSPHORYLATION [LARGE SCALE ANALYSIS] AT SER-477</scope>
    <scope>IDENTIFICATION BY MASS SPECTROMETRY [LARGE SCALE ANALYSIS]</scope>
    <source>
        <tissue>Erythroleukemia</tissue>
    </source>
</reference>
<reference key="14">
    <citation type="journal article" date="2014" name="J. Proteomics">
        <title>An enzyme assisted RP-RPLC approach for in-depth analysis of human liver phosphoproteome.</title>
        <authorList>
            <person name="Bian Y."/>
            <person name="Song C."/>
            <person name="Cheng K."/>
            <person name="Dong M."/>
            <person name="Wang F."/>
            <person name="Huang J."/>
            <person name="Sun D."/>
            <person name="Wang L."/>
            <person name="Ye M."/>
            <person name="Zou H."/>
        </authorList>
    </citation>
    <scope>IDENTIFICATION BY MASS SPECTROMETRY [LARGE SCALE ANALYSIS]</scope>
    <source>
        <tissue>Liver</tissue>
    </source>
</reference>
<reference key="15">
    <citation type="journal article" date="2014" name="Mol. Cell. Proteomics">
        <title>Immunoaffinity enrichment and mass spectrometry analysis of protein methylation.</title>
        <authorList>
            <person name="Guo A."/>
            <person name="Gu H."/>
            <person name="Zhou J."/>
            <person name="Mulhern D."/>
            <person name="Wang Y."/>
            <person name="Lee K.A."/>
            <person name="Yang V."/>
            <person name="Aguiar M."/>
            <person name="Kornhauser J."/>
            <person name="Jia X."/>
            <person name="Ren J."/>
            <person name="Beausoleil S.A."/>
            <person name="Silva J.C."/>
            <person name="Vemulapalli V."/>
            <person name="Bedford M.T."/>
            <person name="Comb M.J."/>
        </authorList>
    </citation>
    <scope>METHYLATION [LARGE SCALE ANALYSIS] AT ARG-507</scope>
    <scope>IDENTIFICATION BY MASS SPECTROMETRY [LARGE SCALE ANALYSIS]</scope>
    <source>
        <tissue>Colon carcinoma</tissue>
    </source>
</reference>
<reference key="16">
    <citation type="journal article" date="2023" name="Nat. Commun.">
        <title>K235 acetylation couples with PSPC1 to regulate the m6A demethylation activity of ALKBH5 and tumorigenesis.</title>
        <authorList>
            <person name="Zhang X.L."/>
            <person name="Chen X.H."/>
            <person name="Xu B."/>
            <person name="Chen M."/>
            <person name="Zhu S."/>
            <person name="Meng N."/>
            <person name="Wang J.Z."/>
            <person name="Zhu H."/>
            <person name="Chen D."/>
            <person name="Liu J.B."/>
            <person name="Yan G.R."/>
        </authorList>
    </citation>
    <scope>INTERACTION WITH ALKBH5</scope>
</reference>
<reference key="17">
    <citation type="journal article" date="2017" name="Mol. Cell">
        <title>HEXIM1 and NEAT1 Long non-coding RNA form a multi-subunit complex that regulates DNA-mediated innate immune response.</title>
        <authorList>
            <person name="Morchikh M."/>
            <person name="Cribier A."/>
            <person name="Raffel R."/>
            <person name="Amraoui S."/>
            <person name="Cau J."/>
            <person name="Severac D."/>
            <person name="Dubois E."/>
            <person name="Schwartz O."/>
            <person name="Bennasser Y."/>
            <person name="Benkirane M."/>
        </authorList>
    </citation>
    <scope>FUNCTION</scope>
    <scope>SUBCELLULAR LOCATION</scope>
    <scope>INTERACTION WITH PRKDC; XRCC5; XRCC6; SFPQ; NONO; HEXIM1; RBM14 AND MATR3</scope>
</reference>
<reference key="18">
    <citation type="journal article" date="2012" name="Proc. Natl. Acad. Sci. U.S.A.">
        <title>Structure of the heterodimer of human NONO and paraspeckle protein component 1 and analysis of its role in subnuclear body formation.</title>
        <authorList>
            <person name="Passon D.M."/>
            <person name="Lee M."/>
            <person name="Rackham O."/>
            <person name="Stanley W.A."/>
            <person name="Sadowska A."/>
            <person name="Filipovska A."/>
            <person name="Fox A.H."/>
            <person name="Bond C.S."/>
        </authorList>
    </citation>
    <scope>X-RAY CRYSTALLOGRAPHY (1.9 ANGSTROMS) OF 61-320 IN COMPLEX WITH NONO</scope>
    <scope>FUNCTION</scope>
    <scope>SUBCELLULAR LOCATION</scope>
    <scope>MUTAGENESIS OF TYR-275 AND TRP-279</scope>
</reference>
<gene>
    <name type="primary">PSPC1</name>
    <name type="synonym">PSP1</name>
</gene>
<evidence type="ECO:0000250" key="1">
    <source>
        <dbReference type="UniProtKB" id="Q8R326"/>
    </source>
</evidence>
<evidence type="ECO:0000255" key="2"/>
<evidence type="ECO:0000255" key="3">
    <source>
        <dbReference type="PROSITE-ProRule" id="PRU00176"/>
    </source>
</evidence>
<evidence type="ECO:0000256" key="4">
    <source>
        <dbReference type="SAM" id="MobiDB-lite"/>
    </source>
</evidence>
<evidence type="ECO:0000269" key="5">
    <source>
    </source>
</evidence>
<evidence type="ECO:0000269" key="6">
    <source>
    </source>
</evidence>
<evidence type="ECO:0000269" key="7">
    <source>
    </source>
</evidence>
<evidence type="ECO:0000269" key="8">
    <source>
    </source>
</evidence>
<evidence type="ECO:0000269" key="9">
    <source>
    </source>
</evidence>
<evidence type="ECO:0000303" key="10">
    <source>
    </source>
</evidence>
<evidence type="ECO:0000303" key="11">
    <source>
    </source>
</evidence>
<evidence type="ECO:0000303" key="12">
    <source>
    </source>
</evidence>
<evidence type="ECO:0000303" key="13">
    <source>
    </source>
</evidence>
<evidence type="ECO:0000303" key="14">
    <source ref="6"/>
</evidence>
<evidence type="ECO:0000305" key="15"/>
<evidence type="ECO:0007744" key="16">
    <source>
    </source>
</evidence>
<evidence type="ECO:0007744" key="17">
    <source>
    </source>
</evidence>
<evidence type="ECO:0007744" key="18">
    <source>
    </source>
</evidence>
<evidence type="ECO:0007744" key="19">
    <source>
    </source>
</evidence>
<evidence type="ECO:0007744" key="20">
    <source>
    </source>
</evidence>
<evidence type="ECO:0007829" key="21">
    <source>
        <dbReference type="PDB" id="3SDE"/>
    </source>
</evidence>
<evidence type="ECO:0007829" key="22">
    <source>
        <dbReference type="PDB" id="5IFN"/>
    </source>
</evidence>
<evidence type="ECO:0007829" key="23">
    <source>
        <dbReference type="PDB" id="5WPA"/>
    </source>
</evidence>
<accession>Q8WXF1</accession>
<accession>Q5JTQ3</accession>
<accession>Q8NCZ9</accession>
<accession>Q8WXE8</accession>
<accession>Q9NV36</accession>
<sequence>MMLRGNLKQVRIEKNPARLRALESAVGESEPAAAAAMALALAGEPAPPAPAPPEDHPDEEMGFTIDIKSFLKPGEKTYTQRCRLFVGNLPTDITEEDFKRLFERYGEPSEVFINRDRGFGFIRLESRTLAEIAKAELDGTILKSRPLRIRFATHGAALTVKNLSPVVSNELLEQAFSQFGPVEKAVVVVDDRGRATGKGFVEFAAKPPARKALERCGDGAFLLTTTPRPVIVEPMEQFDDEDGLPEKLMQKTQQYHKEREQPPRFAQPGTFEFEYASRWKALDEMEKQQREQVDRNIREAKEKLEAEMEAARHEHQLMLMRQDLMRRQEELRRLEELRNQELQKRKQIQLRHEEEHRRREEEMIRHREQEELRRQQEGFKPNYMENREQEMRMGDMGPRGAINMGDAFSPAPAGNQGPPPMMGMNMNNRATIPGPPMGPGPAMGPEGAANMGTPMMPDNGAVHNDRFPQGPPSQMGSPMGSRTGSETPQAPMSGVGPVSGGPGGFGRGSQGGNFEGPNKRRRY</sequence>
<protein>
    <recommendedName>
        <fullName>Paraspeckle component 1</fullName>
    </recommendedName>
    <alternativeName>
        <fullName>Paraspeckle protein 1</fullName>
    </alternativeName>
</protein>
<name>PSPC1_HUMAN</name>
<comment type="function">
    <text evidence="1 7 8">RNA-binding protein required for the formation of nuclear paraspeckles (PubMed:22416126). Binds to poly(A), poly(G) and poly(U) RNA homopolymers (PubMed:22416126). Regulates, cooperatively with NONO and SFPQ, androgen receptor-mediated gene transcription activity in Sertoli cell line (By similarity). Regulates the circadian clock by repressing the transcriptional activator activity of the CLOCK-BMAL1 heterodimer (By similarity). Plays a role in the regulation of DNA virus-mediated innate immune response by assembling into the HDP-RNP complex, a complex that serves as a platform for IRF3 phosphorylation and subsequent innate immune response activation through the cGAS-STING pathway (PubMed:28712728).</text>
</comment>
<comment type="subunit">
    <text evidence="1 6 7 8 9">Forms heterodimers with NONO; this involves formation of a coiled coil domain by helices from both proteins (PubMed:16148043). Found in a RNP complex with CAT2 transcribed nuclear RNA (CTN-RNA) (By similarity). Interaction with NONO is required for its targeting to paraspeckles and perinucleolar caps (PubMed:22416126). Interacts with SFPQ (PubMed:28712728). Part of the HDP-RNP complex composed of at least HEXIM1, PRKDC, XRCC5, XRCC6, paraspeckle proteins (SFPQ, NONO, PSPC1, RBM14, and MATR3) and NEAT1 RNA (PubMed:28712728). Interacts with ALKBH5 (when acetylated); interaction with acetylated ALKBH5 facilitates recognition of N(6)-methyladenosine (m6A) RNAs (PubMed:37369679).</text>
</comment>
<comment type="interaction">
    <interactant intactId="EBI-1392258">
        <id>Q8WXF1</id>
    </interactant>
    <interactant intactId="EBI-948001">
        <id>Q15323</id>
        <label>KRT31</label>
    </interactant>
    <organismsDiffer>false</organismsDiffer>
    <experiments>3</experiments>
</comment>
<comment type="interaction">
    <interactant intactId="EBI-1392258">
        <id>Q8WXF1</id>
    </interactant>
    <interactant intactId="EBI-350527">
        <id>Q15233</id>
        <label>NONO</label>
    </interactant>
    <organismsDiffer>false</organismsDiffer>
    <experiments>16</experiments>
</comment>
<comment type="interaction">
    <interactant intactId="EBI-1392258">
        <id>Q8WXF1</id>
    </interactant>
    <interactant intactId="EBI-10203843">
        <id>Q15233-2</id>
        <label>NONO</label>
    </interactant>
    <organismsDiffer>false</organismsDiffer>
    <experiments>3</experiments>
</comment>
<comment type="interaction">
    <interactant intactId="EBI-1392258">
        <id>Q8WXF1</id>
    </interactant>
    <interactant intactId="EBI-355453">
        <id>P23246</id>
        <label>SFPQ</label>
    </interactant>
    <organismsDiffer>false</organismsDiffer>
    <experiments>4</experiments>
</comment>
<comment type="interaction">
    <interactant intactId="EBI-15974663">
        <id>Q8WXF1-1</id>
    </interactant>
    <interactant intactId="EBI-350527">
        <id>Q15233</id>
        <label>NONO</label>
    </interactant>
    <organismsDiffer>false</organismsDiffer>
    <experiments>7</experiments>
</comment>
<comment type="interaction">
    <interactant intactId="EBI-12135327">
        <id>Q8WXF1-2</id>
    </interactant>
    <interactant intactId="EBI-11988027">
        <id>Q9NRI5-2</id>
        <label>DISC1</label>
    </interactant>
    <organismsDiffer>false</organismsDiffer>
    <experiments>3</experiments>
</comment>
<comment type="interaction">
    <interactant intactId="EBI-12135327">
        <id>Q8WXF1-2</id>
    </interactant>
    <interactant intactId="EBI-1216080">
        <id>Q9Y250</id>
        <label>LZTS1</label>
    </interactant>
    <organismsDiffer>false</organismsDiffer>
    <experiments>3</experiments>
</comment>
<comment type="interaction">
    <interactant intactId="EBI-12135327">
        <id>Q8WXF1-2</id>
    </interactant>
    <interactant intactId="EBI-350527">
        <id>Q15233</id>
        <label>NONO</label>
    </interactant>
    <organismsDiffer>false</organismsDiffer>
    <experiments>4</experiments>
</comment>
<comment type="interaction">
    <interactant intactId="EBI-12135327">
        <id>Q8WXF1-2</id>
    </interactant>
    <interactant intactId="EBI-355720">
        <id>O43809</id>
        <label>NUDT21</label>
    </interactant>
    <organismsDiffer>false</organismsDiffer>
    <experiments>3</experiments>
</comment>
<comment type="interaction">
    <interactant intactId="EBI-12135327">
        <id>Q8WXF1-2</id>
    </interactant>
    <interactant intactId="EBI-527853">
        <id>Q9UGI0</id>
        <label>ZRANB1</label>
    </interactant>
    <organismsDiffer>false</organismsDiffer>
    <experiments>3</experiments>
</comment>
<comment type="interaction">
    <interactant intactId="EBI-12135327">
        <id>Q8WXF1-2</id>
    </interactant>
    <interactant intactId="EBI-17968892">
        <id>A6NJL1</id>
        <label>ZSCAN5B</label>
    </interactant>
    <organismsDiffer>false</organismsDiffer>
    <experiments>3</experiments>
</comment>
<comment type="subcellular location">
    <subcellularLocation>
        <location evidence="5 6 8">Nucleus speckle</location>
    </subcellularLocation>
    <subcellularLocation>
        <location evidence="5">Nucleus</location>
        <location evidence="5">Nucleolus</location>
    </subcellularLocation>
    <subcellularLocation>
        <location evidence="1">Nucleus matrix</location>
    </subcellularLocation>
    <subcellularLocation>
        <location evidence="1">Cytoplasm</location>
    </subcellularLocation>
    <text evidence="5 6">In punctate subnuclear structures often located adjacent to splicing speckles, called paraspeckles (PubMed:11790299, PubMed:16148043). Colocalizes with NONO and SFPQ in paraspeckles and perinucleolar caps in an RNA-dependent manner (PubMed:11790299, PubMed:16148043). May cycle between paraspeckles and nucleolus (PubMed:11790299). In telophase, when daughter nuclei form, localizes to perinucleolar caps (PubMed:11790299).</text>
</comment>
<comment type="alternative products">
    <event type="alternative splicing"/>
    <isoform>
        <id>Q8WXF1-1</id>
        <name>1</name>
        <name>PSP1-alpha</name>
        <sequence type="displayed"/>
    </isoform>
    <isoform>
        <id>Q8WXF1-2</id>
        <name>2</name>
        <name>PSP1-beta</name>
        <sequence type="described" ref="VSP_027274 VSP_027275"/>
    </isoform>
</comment>
<comment type="tissue specificity">
    <text evidence="5">Expressed in pancreas, kidney, skeletal muscle, liver, lung, placenta, brain and heart.</text>
</comment>
<comment type="similarity">
    <text evidence="15">Belongs to the PSPC family.</text>
</comment>
<comment type="sequence caution" evidence="15">
    <conflict type="erroneous termination">
        <sequence resource="EMBL-CDS" id="BAA91924"/>
    </conflict>
    <text>Truncated C-terminus.</text>
</comment>
<dbReference type="EMBL" id="AF448795">
    <property type="protein sequence ID" value="AAL59601.1"/>
    <property type="molecule type" value="mRNA"/>
</dbReference>
<dbReference type="EMBL" id="AF449627">
    <property type="protein sequence ID" value="AAL59602.1"/>
    <property type="molecule type" value="mRNA"/>
</dbReference>
<dbReference type="EMBL" id="AK001817">
    <property type="protein sequence ID" value="BAA91924.1"/>
    <property type="status" value="ALT_SEQ"/>
    <property type="molecule type" value="mRNA"/>
</dbReference>
<dbReference type="EMBL" id="AL354808">
    <property type="status" value="NOT_ANNOTATED_CDS"/>
    <property type="molecule type" value="Genomic_DNA"/>
</dbReference>
<dbReference type="EMBL" id="CH471075">
    <property type="protein sequence ID" value="EAX08232.1"/>
    <property type="molecule type" value="Genomic_DNA"/>
</dbReference>
<dbReference type="EMBL" id="BC014184">
    <property type="protein sequence ID" value="AAH14184.2"/>
    <property type="molecule type" value="mRNA"/>
</dbReference>
<dbReference type="EMBL" id="CR457272">
    <property type="protein sequence ID" value="CAG33553.1"/>
    <property type="molecule type" value="mRNA"/>
</dbReference>
<dbReference type="EMBL" id="AL834505">
    <property type="protein sequence ID" value="CAD39162.1"/>
    <property type="molecule type" value="mRNA"/>
</dbReference>
<dbReference type="CCDS" id="CCDS41870.1">
    <molecule id="Q8WXF1-1"/>
</dbReference>
<dbReference type="CCDS" id="CCDS86343.1">
    <molecule id="Q8WXF1-2"/>
</dbReference>
<dbReference type="RefSeq" id="NP_001035879.1">
    <molecule id="Q8WXF1-1"/>
    <property type="nucleotide sequence ID" value="NM_001042414.4"/>
</dbReference>
<dbReference type="RefSeq" id="NP_001341838.1">
    <molecule id="Q8WXF1-1"/>
    <property type="nucleotide sequence ID" value="NM_001354909.2"/>
</dbReference>
<dbReference type="RefSeq" id="NP_001350589.1">
    <molecule id="Q8WXF1-2"/>
    <property type="nucleotide sequence ID" value="NM_001363660.2"/>
</dbReference>
<dbReference type="RefSeq" id="XP_006719907.1">
    <property type="nucleotide sequence ID" value="XM_006719844.3"/>
</dbReference>
<dbReference type="RefSeq" id="XP_016876139.1">
    <property type="nucleotide sequence ID" value="XM_017020650.1"/>
</dbReference>
<dbReference type="PDB" id="3SDE">
    <property type="method" value="X-ray"/>
    <property type="resolution" value="1.90 A"/>
    <property type="chains" value="A=61-320"/>
</dbReference>
<dbReference type="PDB" id="5IFN">
    <property type="method" value="X-ray"/>
    <property type="resolution" value="3.17 A"/>
    <property type="chains" value="A/B=61-320"/>
</dbReference>
<dbReference type="PDB" id="5WPA">
    <property type="method" value="X-ray"/>
    <property type="resolution" value="2.29 A"/>
    <property type="chains" value="B=61-320"/>
</dbReference>
<dbReference type="PDBsum" id="3SDE"/>
<dbReference type="PDBsum" id="5IFN"/>
<dbReference type="PDBsum" id="5WPA"/>
<dbReference type="SMR" id="Q8WXF1"/>
<dbReference type="BioGRID" id="120558">
    <property type="interactions" value="511"/>
</dbReference>
<dbReference type="ComplexPortal" id="CPX-7764">
    <property type="entry name" value="SFPQ-PSPC1 RNA-binding complex"/>
</dbReference>
<dbReference type="ComplexPortal" id="CPX-7783">
    <property type="entry name" value="PSPC1 RNA-binding homodimer"/>
</dbReference>
<dbReference type="ComplexPortal" id="CPX-889">
    <property type="entry name" value="NONO-PSPC1 RNA-binding complex"/>
</dbReference>
<dbReference type="CORUM" id="Q8WXF1"/>
<dbReference type="DIP" id="DIP-39028N"/>
<dbReference type="FunCoup" id="Q8WXF1">
    <property type="interactions" value="3807"/>
</dbReference>
<dbReference type="IntAct" id="Q8WXF1">
    <property type="interactions" value="370"/>
</dbReference>
<dbReference type="MINT" id="Q8WXF1"/>
<dbReference type="STRING" id="9606.ENSP00000343966"/>
<dbReference type="GlyGen" id="Q8WXF1">
    <property type="glycosylation" value="1 site, 1 O-linked glycan (1 site)"/>
</dbReference>
<dbReference type="iPTMnet" id="Q8WXF1"/>
<dbReference type="MetOSite" id="Q8WXF1"/>
<dbReference type="PhosphoSitePlus" id="Q8WXF1"/>
<dbReference type="SwissPalm" id="Q8WXF1"/>
<dbReference type="BioMuta" id="PSPC1"/>
<dbReference type="DMDM" id="74762636"/>
<dbReference type="CPTAC" id="CPTAC-430"/>
<dbReference type="CPTAC" id="CPTAC-431"/>
<dbReference type="jPOST" id="Q8WXF1"/>
<dbReference type="MassIVE" id="Q8WXF1"/>
<dbReference type="PaxDb" id="9606-ENSP00000343966"/>
<dbReference type="PeptideAtlas" id="Q8WXF1"/>
<dbReference type="ProteomicsDB" id="75023">
    <molecule id="Q8WXF1-1"/>
</dbReference>
<dbReference type="ProteomicsDB" id="75024">
    <molecule id="Q8WXF1-2"/>
</dbReference>
<dbReference type="Pumba" id="Q8WXF1"/>
<dbReference type="Antibodypedia" id="22257">
    <property type="antibodies" value="65 antibodies from 21 providers"/>
</dbReference>
<dbReference type="DNASU" id="55269"/>
<dbReference type="Ensembl" id="ENST00000338910.9">
    <molecule id="Q8WXF1-1"/>
    <property type="protein sequence ID" value="ENSP00000343966.4"/>
    <property type="gene ID" value="ENSG00000121390.19"/>
</dbReference>
<dbReference type="Ensembl" id="ENST00000471658.5">
    <molecule id="Q8WXF1-2"/>
    <property type="protein sequence ID" value="ENSP00000436038.1"/>
    <property type="gene ID" value="ENSG00000121390.19"/>
</dbReference>
<dbReference type="Ensembl" id="ENST00000492741.5">
    <molecule id="Q8WXF1-2"/>
    <property type="protein sequence ID" value="ENSP00000435921.1"/>
    <property type="gene ID" value="ENSG00000121390.19"/>
</dbReference>
<dbReference type="Ensembl" id="ENST00000619300.4">
    <molecule id="Q8WXF1-1"/>
    <property type="protein sequence ID" value="ENSP00000481916.1"/>
    <property type="gene ID" value="ENSG00000121390.19"/>
</dbReference>
<dbReference type="GeneID" id="55269"/>
<dbReference type="KEGG" id="hsa:55269"/>
<dbReference type="MANE-Select" id="ENST00000338910.9">
    <property type="protein sequence ID" value="ENSP00000343966.4"/>
    <property type="RefSeq nucleotide sequence ID" value="NM_001354909.2"/>
    <property type="RefSeq protein sequence ID" value="NP_001341838.1"/>
</dbReference>
<dbReference type="UCSC" id="uc021rgx.2">
    <molecule id="Q8WXF1-1"/>
    <property type="organism name" value="human"/>
</dbReference>
<dbReference type="AGR" id="HGNC:20320"/>
<dbReference type="CTD" id="55269"/>
<dbReference type="DisGeNET" id="55269"/>
<dbReference type="GeneCards" id="PSPC1"/>
<dbReference type="HGNC" id="HGNC:20320">
    <property type="gene designation" value="PSPC1"/>
</dbReference>
<dbReference type="HPA" id="ENSG00000121390">
    <property type="expression patterns" value="Low tissue specificity"/>
</dbReference>
<dbReference type="MIM" id="612408">
    <property type="type" value="gene"/>
</dbReference>
<dbReference type="neXtProt" id="NX_Q8WXF1"/>
<dbReference type="OpenTargets" id="ENSG00000121390"/>
<dbReference type="PharmGKB" id="PA134968603"/>
<dbReference type="VEuPathDB" id="HostDB:ENSG00000121390"/>
<dbReference type="eggNOG" id="KOG0115">
    <property type="taxonomic scope" value="Eukaryota"/>
</dbReference>
<dbReference type="GeneTree" id="ENSGT00940000157358"/>
<dbReference type="HOGENOM" id="CLU_027185_0_0_1"/>
<dbReference type="InParanoid" id="Q8WXF1"/>
<dbReference type="OMA" id="EQDMRMG"/>
<dbReference type="OrthoDB" id="10067824at2759"/>
<dbReference type="PAN-GO" id="Q8WXF1">
    <property type="GO annotations" value="2 GO annotations based on evolutionary models"/>
</dbReference>
<dbReference type="PhylomeDB" id="Q8WXF1"/>
<dbReference type="TreeFam" id="TF315795"/>
<dbReference type="PathwayCommons" id="Q8WXF1"/>
<dbReference type="SignaLink" id="Q8WXF1"/>
<dbReference type="SIGNOR" id="Q8WXF1"/>
<dbReference type="BioGRID-ORCS" id="55269">
    <property type="hits" value="80 hits in 1153 CRISPR screens"/>
</dbReference>
<dbReference type="CD-CODE" id="1A18FFC4">
    <property type="entry name" value="Paraspeckle"/>
</dbReference>
<dbReference type="CD-CODE" id="5D9BA5D6">
    <property type="entry name" value="Synthetic Condensate 000093"/>
</dbReference>
<dbReference type="CD-CODE" id="804901D1">
    <property type="entry name" value="Nuclear speckle"/>
</dbReference>
<dbReference type="CD-CODE" id="91857CE7">
    <property type="entry name" value="Nucleolus"/>
</dbReference>
<dbReference type="CD-CODE" id="DEE660B4">
    <property type="entry name" value="Stress granule"/>
</dbReference>
<dbReference type="ChiTaRS" id="PSPC1">
    <property type="organism name" value="human"/>
</dbReference>
<dbReference type="EvolutionaryTrace" id="Q8WXF1"/>
<dbReference type="GenomeRNAi" id="55269"/>
<dbReference type="Pharos" id="Q8WXF1">
    <property type="development level" value="Tbio"/>
</dbReference>
<dbReference type="PRO" id="PR:Q8WXF1"/>
<dbReference type="Proteomes" id="UP000005640">
    <property type="component" value="Chromosome 13"/>
</dbReference>
<dbReference type="RNAct" id="Q8WXF1">
    <property type="molecule type" value="protein"/>
</dbReference>
<dbReference type="Bgee" id="ENSG00000121390">
    <property type="expression patterns" value="Expressed in ventricular zone and 191 other cell types or tissues"/>
</dbReference>
<dbReference type="ExpressionAtlas" id="Q8WXF1">
    <property type="expression patterns" value="baseline and differential"/>
</dbReference>
<dbReference type="GO" id="GO:0005737">
    <property type="term" value="C:cytoplasm"/>
    <property type="evidence" value="ECO:0007669"/>
    <property type="project" value="UniProtKB-SubCell"/>
</dbReference>
<dbReference type="GO" id="GO:0001650">
    <property type="term" value="C:fibrillar center"/>
    <property type="evidence" value="ECO:0000314"/>
    <property type="project" value="HPA"/>
</dbReference>
<dbReference type="GO" id="GO:0016363">
    <property type="term" value="C:nuclear matrix"/>
    <property type="evidence" value="ECO:0007669"/>
    <property type="project" value="UniProtKB-SubCell"/>
</dbReference>
<dbReference type="GO" id="GO:0016607">
    <property type="term" value="C:nuclear speck"/>
    <property type="evidence" value="ECO:0007669"/>
    <property type="project" value="UniProtKB-SubCell"/>
</dbReference>
<dbReference type="GO" id="GO:0005654">
    <property type="term" value="C:nucleoplasm"/>
    <property type="evidence" value="ECO:0000314"/>
    <property type="project" value="HPA"/>
</dbReference>
<dbReference type="GO" id="GO:0005634">
    <property type="term" value="C:nucleus"/>
    <property type="evidence" value="ECO:0000318"/>
    <property type="project" value="GO_Central"/>
</dbReference>
<dbReference type="GO" id="GO:0042382">
    <property type="term" value="C:paraspeckles"/>
    <property type="evidence" value="ECO:0000314"/>
    <property type="project" value="FlyBase"/>
</dbReference>
<dbReference type="GO" id="GO:0003723">
    <property type="term" value="F:RNA binding"/>
    <property type="evidence" value="ECO:0000314"/>
    <property type="project" value="UniProt"/>
</dbReference>
<dbReference type="GO" id="GO:0002218">
    <property type="term" value="P:activation of innate immune response"/>
    <property type="evidence" value="ECO:0000314"/>
    <property type="project" value="UniProtKB"/>
</dbReference>
<dbReference type="GO" id="GO:0045087">
    <property type="term" value="P:innate immune response"/>
    <property type="evidence" value="ECO:0007669"/>
    <property type="project" value="UniProtKB-KW"/>
</dbReference>
<dbReference type="GO" id="GO:0140694">
    <property type="term" value="P:membraneless organelle assembly"/>
    <property type="evidence" value="ECO:0000314"/>
    <property type="project" value="UniProt"/>
</dbReference>
<dbReference type="GO" id="GO:0045892">
    <property type="term" value="P:negative regulation of DNA-templated transcription"/>
    <property type="evidence" value="ECO:0000250"/>
    <property type="project" value="UniProtKB"/>
</dbReference>
<dbReference type="GO" id="GO:0042752">
    <property type="term" value="P:regulation of circadian rhythm"/>
    <property type="evidence" value="ECO:0000250"/>
    <property type="project" value="UniProtKB"/>
</dbReference>
<dbReference type="GO" id="GO:0006355">
    <property type="term" value="P:regulation of DNA-templated transcription"/>
    <property type="evidence" value="ECO:0000318"/>
    <property type="project" value="GO_Central"/>
</dbReference>
<dbReference type="GO" id="GO:0048511">
    <property type="term" value="P:rhythmic process"/>
    <property type="evidence" value="ECO:0007669"/>
    <property type="project" value="UniProtKB-KW"/>
</dbReference>
<dbReference type="CDD" id="cd12949">
    <property type="entry name" value="NOPS_PSPC1"/>
    <property type="match status" value="1"/>
</dbReference>
<dbReference type="CDD" id="cd12586">
    <property type="entry name" value="RRM1_PSP1"/>
    <property type="match status" value="1"/>
</dbReference>
<dbReference type="CDD" id="cd12589">
    <property type="entry name" value="RRM2_PSP1"/>
    <property type="match status" value="1"/>
</dbReference>
<dbReference type="FunFam" id="3.30.70.330:FF:000043">
    <property type="entry name" value="paraspeckle component 1 isoform X1"/>
    <property type="match status" value="1"/>
</dbReference>
<dbReference type="FunFam" id="3.30.70.330:FF:000126">
    <property type="entry name" value="paraspeckle component 1 isoform X1"/>
    <property type="match status" value="1"/>
</dbReference>
<dbReference type="Gene3D" id="3.30.70.330">
    <property type="match status" value="2"/>
</dbReference>
<dbReference type="Gene3D" id="6.10.250.1170">
    <property type="match status" value="1"/>
</dbReference>
<dbReference type="InterPro" id="IPR012975">
    <property type="entry name" value="NOPS"/>
</dbReference>
<dbReference type="InterPro" id="IPR012677">
    <property type="entry name" value="Nucleotide-bd_a/b_plait_sf"/>
</dbReference>
<dbReference type="InterPro" id="IPR034522">
    <property type="entry name" value="PSP1_RRM1"/>
</dbReference>
<dbReference type="InterPro" id="IPR034523">
    <property type="entry name" value="PSP1_RRM2"/>
</dbReference>
<dbReference type="InterPro" id="IPR035979">
    <property type="entry name" value="RBD_domain_sf"/>
</dbReference>
<dbReference type="InterPro" id="IPR000504">
    <property type="entry name" value="RRM_dom"/>
</dbReference>
<dbReference type="PANTHER" id="PTHR23189">
    <property type="entry name" value="RNA RECOGNITION MOTIF-CONTAINING"/>
    <property type="match status" value="1"/>
</dbReference>
<dbReference type="Pfam" id="PF08075">
    <property type="entry name" value="NOPS"/>
    <property type="match status" value="1"/>
</dbReference>
<dbReference type="Pfam" id="PF00076">
    <property type="entry name" value="RRM_1"/>
    <property type="match status" value="2"/>
</dbReference>
<dbReference type="SMART" id="SM00360">
    <property type="entry name" value="RRM"/>
    <property type="match status" value="2"/>
</dbReference>
<dbReference type="SUPFAM" id="SSF54928">
    <property type="entry name" value="RNA-binding domain, RBD"/>
    <property type="match status" value="1"/>
</dbReference>
<dbReference type="PROSITE" id="PS50102">
    <property type="entry name" value="RRM"/>
    <property type="match status" value="2"/>
</dbReference>
<organism>
    <name type="scientific">Homo sapiens</name>
    <name type="common">Human</name>
    <dbReference type="NCBI Taxonomy" id="9606"/>
    <lineage>
        <taxon>Eukaryota</taxon>
        <taxon>Metazoa</taxon>
        <taxon>Chordata</taxon>
        <taxon>Craniata</taxon>
        <taxon>Vertebrata</taxon>
        <taxon>Euteleostomi</taxon>
        <taxon>Mammalia</taxon>
        <taxon>Eutheria</taxon>
        <taxon>Euarchontoglires</taxon>
        <taxon>Primates</taxon>
        <taxon>Haplorrhini</taxon>
        <taxon>Catarrhini</taxon>
        <taxon>Hominidae</taxon>
        <taxon>Homo</taxon>
    </lineage>
</organism>
<proteinExistence type="evidence at protein level"/>